<keyword id="KW-0997">Cell inner membrane</keyword>
<keyword id="KW-1003">Cell membrane</keyword>
<keyword id="KW-0472">Membrane</keyword>
<reference key="1">
    <citation type="journal article" date="2008" name="Genome Res.">
        <title>Chlamydia trachomatis: genome sequence analysis of lymphogranuloma venereum isolates.</title>
        <authorList>
            <person name="Thomson N.R."/>
            <person name="Holden M.T.G."/>
            <person name="Carder C."/>
            <person name="Lennard N."/>
            <person name="Lockey S.J."/>
            <person name="Marsh P."/>
            <person name="Skipp P."/>
            <person name="O'Connor C.D."/>
            <person name="Goodhead I."/>
            <person name="Norbertzcak H."/>
            <person name="Harris B."/>
            <person name="Ormond D."/>
            <person name="Rance R."/>
            <person name="Quail M.A."/>
            <person name="Parkhill J."/>
            <person name="Stephens R.S."/>
            <person name="Clarke I.N."/>
        </authorList>
    </citation>
    <scope>NUCLEOTIDE SEQUENCE [LARGE SCALE GENOMIC DNA]</scope>
    <source>
        <strain>ATCC VR-902B / DSM 19102 / 434/Bu</strain>
    </source>
</reference>
<protein>
    <recommendedName>
        <fullName evidence="1">Putative membrane protein insertion efficiency factor</fullName>
    </recommendedName>
</protein>
<organism>
    <name type="scientific">Chlamydia trachomatis serovar L2 (strain ATCC VR-902B / DSM 19102 / 434/Bu)</name>
    <dbReference type="NCBI Taxonomy" id="471472"/>
    <lineage>
        <taxon>Bacteria</taxon>
        <taxon>Pseudomonadati</taxon>
        <taxon>Chlamydiota</taxon>
        <taxon>Chlamydiia</taxon>
        <taxon>Chlamydiales</taxon>
        <taxon>Chlamydiaceae</taxon>
        <taxon>Chlamydia/Chlamydophila group</taxon>
        <taxon>Chlamydia</taxon>
    </lineage>
</organism>
<name>YIDD_CHLT2</name>
<sequence>MQTSRISSFFRGLVHLYRWAISPFLGAPCRFFPTCSEYALVALKKHPLRKSLFLIAKRLLKCGPWCIGGIDLVPRTSVEEYLSSPTPLAESPDDRTVPHTQETS</sequence>
<comment type="function">
    <text evidence="1">Could be involved in insertion of integral membrane proteins into the membrane.</text>
</comment>
<comment type="subcellular location">
    <subcellularLocation>
        <location evidence="1">Cell inner membrane</location>
        <topology evidence="1">Peripheral membrane protein</topology>
        <orientation evidence="1">Cytoplasmic side</orientation>
    </subcellularLocation>
</comment>
<comment type="similarity">
    <text evidence="1">Belongs to the UPF0161 family.</text>
</comment>
<evidence type="ECO:0000255" key="1">
    <source>
        <dbReference type="HAMAP-Rule" id="MF_00386"/>
    </source>
</evidence>
<evidence type="ECO:0000256" key="2">
    <source>
        <dbReference type="SAM" id="MobiDB-lite"/>
    </source>
</evidence>
<proteinExistence type="inferred from homology"/>
<dbReference type="EMBL" id="AM884176">
    <property type="protein sequence ID" value="CAP04172.1"/>
    <property type="molecule type" value="Genomic_DNA"/>
</dbReference>
<dbReference type="RefSeq" id="YP_001654805.1">
    <property type="nucleotide sequence ID" value="NC_010287.1"/>
</dbReference>
<dbReference type="KEGG" id="ctb:CTL0734"/>
<dbReference type="PATRIC" id="fig|471472.4.peg.787"/>
<dbReference type="HOGENOM" id="CLU_144811_2_1_0"/>
<dbReference type="Proteomes" id="UP001154402">
    <property type="component" value="Chromosome"/>
</dbReference>
<dbReference type="GO" id="GO:0005886">
    <property type="term" value="C:plasma membrane"/>
    <property type="evidence" value="ECO:0007669"/>
    <property type="project" value="UniProtKB-SubCell"/>
</dbReference>
<dbReference type="HAMAP" id="MF_00386">
    <property type="entry name" value="UPF0161_YidD"/>
    <property type="match status" value="1"/>
</dbReference>
<dbReference type="InterPro" id="IPR002696">
    <property type="entry name" value="Membr_insert_effic_factor_YidD"/>
</dbReference>
<dbReference type="NCBIfam" id="TIGR00278">
    <property type="entry name" value="membrane protein insertion efficiency factor YidD"/>
    <property type="match status" value="1"/>
</dbReference>
<dbReference type="PANTHER" id="PTHR33383">
    <property type="entry name" value="MEMBRANE PROTEIN INSERTION EFFICIENCY FACTOR-RELATED"/>
    <property type="match status" value="1"/>
</dbReference>
<dbReference type="PANTHER" id="PTHR33383:SF1">
    <property type="entry name" value="MEMBRANE PROTEIN INSERTION EFFICIENCY FACTOR-RELATED"/>
    <property type="match status" value="1"/>
</dbReference>
<dbReference type="Pfam" id="PF01809">
    <property type="entry name" value="YidD"/>
    <property type="match status" value="1"/>
</dbReference>
<dbReference type="SMART" id="SM01234">
    <property type="entry name" value="Haemolytic"/>
    <property type="match status" value="1"/>
</dbReference>
<feature type="chain" id="PRO_1000122627" description="Putative membrane protein insertion efficiency factor">
    <location>
        <begin position="1"/>
        <end position="104"/>
    </location>
</feature>
<feature type="region of interest" description="Disordered" evidence="2">
    <location>
        <begin position="83"/>
        <end position="104"/>
    </location>
</feature>
<accession>B0B846</accession>
<gene>
    <name type="ordered locus">CTL0734</name>
</gene>